<gene>
    <name type="primary">DBP3</name>
    <name type="ordered locus">YGL078C</name>
</gene>
<keyword id="KW-0067">ATP-binding</keyword>
<keyword id="KW-0347">Helicase</keyword>
<keyword id="KW-0378">Hydrolase</keyword>
<keyword id="KW-0547">Nucleotide-binding</keyword>
<keyword id="KW-0539">Nucleus</keyword>
<keyword id="KW-1185">Reference proteome</keyword>
<keyword id="KW-0690">Ribosome biogenesis</keyword>
<keyword id="KW-0694">RNA-binding</keyword>
<keyword id="KW-0698">rRNA processing</keyword>
<organism>
    <name type="scientific">Saccharomyces cerevisiae (strain ATCC 204508 / S288c)</name>
    <name type="common">Baker's yeast</name>
    <dbReference type="NCBI Taxonomy" id="559292"/>
    <lineage>
        <taxon>Eukaryota</taxon>
        <taxon>Fungi</taxon>
        <taxon>Dikarya</taxon>
        <taxon>Ascomycota</taxon>
        <taxon>Saccharomycotina</taxon>
        <taxon>Saccharomycetes</taxon>
        <taxon>Saccharomycetales</taxon>
        <taxon>Saccharomycetaceae</taxon>
        <taxon>Saccharomyces</taxon>
    </lineage>
</organism>
<name>DBP3_YEAST</name>
<evidence type="ECO:0000255" key="1">
    <source>
        <dbReference type="PROSITE-ProRule" id="PRU00541"/>
    </source>
</evidence>
<evidence type="ECO:0000255" key="2">
    <source>
        <dbReference type="PROSITE-ProRule" id="PRU00542"/>
    </source>
</evidence>
<evidence type="ECO:0000256" key="3">
    <source>
        <dbReference type="SAM" id="MobiDB-lite"/>
    </source>
</evidence>
<evidence type="ECO:0000269" key="4">
    <source>
    </source>
</evidence>
<evidence type="ECO:0000269" key="5">
    <source>
    </source>
</evidence>
<evidence type="ECO:0000269" key="6">
    <source>
    </source>
</evidence>
<evidence type="ECO:0000305" key="7"/>
<protein>
    <recommendedName>
        <fullName>ATP-dependent RNA helicase DBP3</fullName>
        <ecNumber>3.6.4.13</ecNumber>
    </recommendedName>
    <alternativeName>
        <fullName>DEAD box protein 3</fullName>
    </alternativeName>
    <alternativeName>
        <fullName>Helicase CA3</fullName>
    </alternativeName>
</protein>
<sequence length="523" mass="58827">MTKEEIADKKRKVVDEEVIEKKKSKKHKKDKKDKKEKKDKKHKKHKKEKKGEKEVEVPEKESEKKPEPTSAVASEFYVQSEALTSLPQSDIDEYFKENEIAVEDSLDLALRPLLSFDYLSLDSSIQAEISKFPKPTPIQAVAWPYLLSGKDVVGVAETGSGKTFAFGVPAISHLMNDQKKRGIQVLVISPTRELASQIYDNLIVLTDKVGMQCCCVYGGVPKDEQRIQLKKSQVVVATPGRLLDLLQEGSVDLSQVNYLVLDEADRMLEKGFEEDIKNIIRETDASKRQTLMFTATWPKEVRELASTFMNNPIKVSIGNTDQLTANKRITQIVEVVDPRGKERKLLELLKKYHSGPKKNEKVLIFALYKKEAARVERNLKYNGYNVAAIHGDLSQQQRTQALNEFKSGKSNLLLATDVAARGLDIPNVKTVINLTFPLTVEDYVHRIGRTGRAGQTGTAHTLFTEQEKHLAGGLVNVLNGANQPVPEDLIKFGTHTKKKEHSAYGSFFKDVDLTKKPKKITFD</sequence>
<feature type="chain" id="PRO_0000055017" description="ATP-dependent RNA helicase DBP3">
    <location>
        <begin position="1"/>
        <end position="523"/>
    </location>
</feature>
<feature type="domain" description="Helicase ATP-binding" evidence="1">
    <location>
        <begin position="143"/>
        <end position="315"/>
    </location>
</feature>
<feature type="domain" description="Helicase C-terminal" evidence="2">
    <location>
        <begin position="344"/>
        <end position="493"/>
    </location>
</feature>
<feature type="region of interest" description="Disordered" evidence="3">
    <location>
        <begin position="1"/>
        <end position="71"/>
    </location>
</feature>
<feature type="short sequence motif" description="Q motif">
    <location>
        <begin position="114"/>
        <end position="140"/>
    </location>
</feature>
<feature type="short sequence motif" description="DEAD box">
    <location>
        <begin position="262"/>
        <end position="265"/>
    </location>
</feature>
<feature type="compositionally biased region" description="Basic and acidic residues" evidence="3">
    <location>
        <begin position="1"/>
        <end position="21"/>
    </location>
</feature>
<feature type="compositionally biased region" description="Basic residues" evidence="3">
    <location>
        <begin position="22"/>
        <end position="48"/>
    </location>
</feature>
<feature type="compositionally biased region" description="Basic and acidic residues" evidence="3">
    <location>
        <begin position="49"/>
        <end position="67"/>
    </location>
</feature>
<feature type="binding site" evidence="1">
    <location>
        <begin position="156"/>
        <end position="163"/>
    </location>
    <ligand>
        <name>ATP</name>
        <dbReference type="ChEBI" id="CHEBI:30616"/>
    </ligand>
</feature>
<feature type="sequence conflict" description="In Ref. 5; no nucleotide entry." evidence="7" ref="5">
    <original>E</original>
    <variation>A</variation>
    <location>
        <position position="441"/>
    </location>
</feature>
<feature type="sequence conflict" description="In Ref. 5; no nucleotide entry." evidence="7" ref="5">
    <original>V</original>
    <variation>I</variation>
    <location>
        <position position="444"/>
    </location>
</feature>
<dbReference type="EC" id="3.6.4.13"/>
<dbReference type="EMBL" id="M80437">
    <property type="protein sequence ID" value="AAA73137.1"/>
    <property type="molecule type" value="Genomic_DNA"/>
</dbReference>
<dbReference type="EMBL" id="Z72600">
    <property type="protein sequence ID" value="CAA96783.1"/>
    <property type="molecule type" value="Genomic_DNA"/>
</dbReference>
<dbReference type="EMBL" id="BK006941">
    <property type="protein sequence ID" value="DAA08027.1"/>
    <property type="molecule type" value="Genomic_DNA"/>
</dbReference>
<dbReference type="PIR" id="S30805">
    <property type="entry name" value="S30805"/>
</dbReference>
<dbReference type="RefSeq" id="NP_011437.3">
    <property type="nucleotide sequence ID" value="NM_001180943.3"/>
</dbReference>
<dbReference type="SMR" id="P20447"/>
<dbReference type="BioGRID" id="33172">
    <property type="interactions" value="293"/>
</dbReference>
<dbReference type="DIP" id="DIP-2668N"/>
<dbReference type="FunCoup" id="P20447">
    <property type="interactions" value="498"/>
</dbReference>
<dbReference type="IntAct" id="P20447">
    <property type="interactions" value="18"/>
</dbReference>
<dbReference type="MINT" id="P20447"/>
<dbReference type="STRING" id="4932.YGL078C"/>
<dbReference type="iPTMnet" id="P20447"/>
<dbReference type="PaxDb" id="4932-YGL078C"/>
<dbReference type="PeptideAtlas" id="P20447"/>
<dbReference type="EnsemblFungi" id="YGL078C_mRNA">
    <property type="protein sequence ID" value="YGL078C"/>
    <property type="gene ID" value="YGL078C"/>
</dbReference>
<dbReference type="GeneID" id="852802"/>
<dbReference type="KEGG" id="sce:YGL078C"/>
<dbReference type="AGR" id="SGD:S000003046"/>
<dbReference type="SGD" id="S000003046">
    <property type="gene designation" value="DBP3"/>
</dbReference>
<dbReference type="VEuPathDB" id="FungiDB:YGL078C"/>
<dbReference type="eggNOG" id="KOG0331">
    <property type="taxonomic scope" value="Eukaryota"/>
</dbReference>
<dbReference type="HOGENOM" id="CLU_003041_1_5_1"/>
<dbReference type="InParanoid" id="P20447"/>
<dbReference type="OMA" id="KKTHDMY"/>
<dbReference type="OrthoDB" id="196131at2759"/>
<dbReference type="BioCyc" id="YEAST:G3O-30579-MONOMER"/>
<dbReference type="SABIO-RK" id="P20447"/>
<dbReference type="BioGRID-ORCS" id="852802">
    <property type="hits" value="1 hit in 10 CRISPR screens"/>
</dbReference>
<dbReference type="CD-CODE" id="E03F929F">
    <property type="entry name" value="Stress granule"/>
</dbReference>
<dbReference type="PRO" id="PR:P20447"/>
<dbReference type="Proteomes" id="UP000002311">
    <property type="component" value="Chromosome VII"/>
</dbReference>
<dbReference type="RNAct" id="P20447">
    <property type="molecule type" value="protein"/>
</dbReference>
<dbReference type="GO" id="GO:0005730">
    <property type="term" value="C:nucleolus"/>
    <property type="evidence" value="ECO:0000314"/>
    <property type="project" value="SGD"/>
</dbReference>
<dbReference type="GO" id="GO:0030687">
    <property type="term" value="C:preribosome, large subunit precursor"/>
    <property type="evidence" value="ECO:0000314"/>
    <property type="project" value="SGD"/>
</dbReference>
<dbReference type="GO" id="GO:0005524">
    <property type="term" value="F:ATP binding"/>
    <property type="evidence" value="ECO:0007669"/>
    <property type="project" value="UniProtKB-KW"/>
</dbReference>
<dbReference type="GO" id="GO:0016887">
    <property type="term" value="F:ATP hydrolysis activity"/>
    <property type="evidence" value="ECO:0007669"/>
    <property type="project" value="RHEA"/>
</dbReference>
<dbReference type="GO" id="GO:0008186">
    <property type="term" value="F:ATP-dependent activity, acting on RNA"/>
    <property type="evidence" value="ECO:0000314"/>
    <property type="project" value="SGD"/>
</dbReference>
<dbReference type="GO" id="GO:0003729">
    <property type="term" value="F:mRNA binding"/>
    <property type="evidence" value="ECO:0000318"/>
    <property type="project" value="GO_Central"/>
</dbReference>
<dbReference type="GO" id="GO:0003724">
    <property type="term" value="F:RNA helicase activity"/>
    <property type="evidence" value="ECO:0000314"/>
    <property type="project" value="SGD"/>
</dbReference>
<dbReference type="GO" id="GO:0000464">
    <property type="term" value="P:endonucleolytic cleavage in ITS1 upstream of 5.8S rRNA from tricistronic rRNA transcript (SSU-rRNA, 5.8S rRNA, LSU-rRNA)"/>
    <property type="evidence" value="ECO:0000315"/>
    <property type="project" value="SGD"/>
</dbReference>
<dbReference type="GO" id="GO:0006364">
    <property type="term" value="P:rRNA processing"/>
    <property type="evidence" value="ECO:0000318"/>
    <property type="project" value="GO_Central"/>
</dbReference>
<dbReference type="CDD" id="cd00268">
    <property type="entry name" value="DEADc"/>
    <property type="match status" value="1"/>
</dbReference>
<dbReference type="CDD" id="cd18787">
    <property type="entry name" value="SF2_C_DEAD"/>
    <property type="match status" value="1"/>
</dbReference>
<dbReference type="FunFam" id="3.40.50.300:FF:002174">
    <property type="entry name" value="ATP-dependent RNA helicase DBP3"/>
    <property type="match status" value="1"/>
</dbReference>
<dbReference type="FunFam" id="3.40.50.300:FF:000008">
    <property type="entry name" value="ATP-dependent RNA helicase RhlB"/>
    <property type="match status" value="1"/>
</dbReference>
<dbReference type="Gene3D" id="3.40.50.300">
    <property type="entry name" value="P-loop containing nucleotide triphosphate hydrolases"/>
    <property type="match status" value="2"/>
</dbReference>
<dbReference type="InterPro" id="IPR011545">
    <property type="entry name" value="DEAD/DEAH_box_helicase_dom"/>
</dbReference>
<dbReference type="InterPro" id="IPR014001">
    <property type="entry name" value="Helicase_ATP-bd"/>
</dbReference>
<dbReference type="InterPro" id="IPR001650">
    <property type="entry name" value="Helicase_C-like"/>
</dbReference>
<dbReference type="InterPro" id="IPR027417">
    <property type="entry name" value="P-loop_NTPase"/>
</dbReference>
<dbReference type="InterPro" id="IPR000629">
    <property type="entry name" value="RNA-helicase_DEAD-box_CS"/>
</dbReference>
<dbReference type="PANTHER" id="PTHR47958">
    <property type="entry name" value="ATP-DEPENDENT RNA HELICASE DBP3"/>
    <property type="match status" value="1"/>
</dbReference>
<dbReference type="Pfam" id="PF00270">
    <property type="entry name" value="DEAD"/>
    <property type="match status" value="1"/>
</dbReference>
<dbReference type="Pfam" id="PF00271">
    <property type="entry name" value="Helicase_C"/>
    <property type="match status" value="1"/>
</dbReference>
<dbReference type="SMART" id="SM00487">
    <property type="entry name" value="DEXDc"/>
    <property type="match status" value="1"/>
</dbReference>
<dbReference type="SMART" id="SM00490">
    <property type="entry name" value="HELICc"/>
    <property type="match status" value="1"/>
</dbReference>
<dbReference type="SUPFAM" id="SSF52540">
    <property type="entry name" value="P-loop containing nucleoside triphosphate hydrolases"/>
    <property type="match status" value="1"/>
</dbReference>
<dbReference type="PROSITE" id="PS00039">
    <property type="entry name" value="DEAD_ATP_HELICASE"/>
    <property type="match status" value="1"/>
</dbReference>
<dbReference type="PROSITE" id="PS51192">
    <property type="entry name" value="HELICASE_ATP_BIND_1"/>
    <property type="match status" value="1"/>
</dbReference>
<dbReference type="PROSITE" id="PS51194">
    <property type="entry name" value="HELICASE_CTER"/>
    <property type="match status" value="1"/>
</dbReference>
<dbReference type="PROSITE" id="PS51195">
    <property type="entry name" value="Q_MOTIF"/>
    <property type="match status" value="1"/>
</dbReference>
<accession>P20447</accession>
<accession>D6VU66</accession>
<reference key="1">
    <citation type="submission" date="1991-12" db="EMBL/GenBank/DDBJ databases">
        <authorList>
            <person name="Johnston M."/>
            <person name="Nogae I."/>
        </authorList>
    </citation>
    <scope>NUCLEOTIDE SEQUENCE [GENOMIC DNA]</scope>
    <source>
        <strain>ATCC 204508 / S288c</strain>
    </source>
</reference>
<reference key="2">
    <citation type="journal article" date="1997" name="Yeast">
        <title>Sequence analysis of 203 kilobases from Saccharomyces cerevisiae chromosome VII.</title>
        <authorList>
            <person name="Rieger M."/>
            <person name="Brueckner M."/>
            <person name="Schaefer M."/>
            <person name="Mueller-Auer S."/>
        </authorList>
    </citation>
    <scope>NUCLEOTIDE SEQUENCE [GENOMIC DNA]</scope>
    <source>
        <strain>ATCC 204508 / S288c</strain>
    </source>
</reference>
<reference key="3">
    <citation type="journal article" date="1997" name="Nature">
        <title>The nucleotide sequence of Saccharomyces cerevisiae chromosome VII.</title>
        <authorList>
            <person name="Tettelin H."/>
            <person name="Agostoni-Carbone M.L."/>
            <person name="Albermann K."/>
            <person name="Albers M."/>
            <person name="Arroyo J."/>
            <person name="Backes U."/>
            <person name="Barreiros T."/>
            <person name="Bertani I."/>
            <person name="Bjourson A.J."/>
            <person name="Brueckner M."/>
            <person name="Bruschi C.V."/>
            <person name="Carignani G."/>
            <person name="Castagnoli L."/>
            <person name="Cerdan E."/>
            <person name="Clemente M.L."/>
            <person name="Coblenz A."/>
            <person name="Coglievina M."/>
            <person name="Coissac E."/>
            <person name="Defoor E."/>
            <person name="Del Bino S."/>
            <person name="Delius H."/>
            <person name="Delneri D."/>
            <person name="de Wergifosse P."/>
            <person name="Dujon B."/>
            <person name="Durand P."/>
            <person name="Entian K.-D."/>
            <person name="Eraso P."/>
            <person name="Escribano V."/>
            <person name="Fabiani L."/>
            <person name="Fartmann B."/>
            <person name="Feroli F."/>
            <person name="Feuermann M."/>
            <person name="Frontali L."/>
            <person name="Garcia-Gonzalez M."/>
            <person name="Garcia-Saez M.I."/>
            <person name="Goffeau A."/>
            <person name="Guerreiro P."/>
            <person name="Hani J."/>
            <person name="Hansen M."/>
            <person name="Hebling U."/>
            <person name="Hernandez K."/>
            <person name="Heumann K."/>
            <person name="Hilger F."/>
            <person name="Hofmann B."/>
            <person name="Indge K.J."/>
            <person name="James C.M."/>
            <person name="Klima R."/>
            <person name="Koetter P."/>
            <person name="Kramer B."/>
            <person name="Kramer W."/>
            <person name="Lauquin G."/>
            <person name="Leuther H."/>
            <person name="Louis E.J."/>
            <person name="Maillier E."/>
            <person name="Marconi A."/>
            <person name="Martegani E."/>
            <person name="Mazon M.J."/>
            <person name="Mazzoni C."/>
            <person name="McReynolds A.D.K."/>
            <person name="Melchioretto P."/>
            <person name="Mewes H.-W."/>
            <person name="Minenkova O."/>
            <person name="Mueller-Auer S."/>
            <person name="Nawrocki A."/>
            <person name="Netter P."/>
            <person name="Neu R."/>
            <person name="Nombela C."/>
            <person name="Oliver S.G."/>
            <person name="Panzeri L."/>
            <person name="Paoluzi S."/>
            <person name="Plevani P."/>
            <person name="Portetelle D."/>
            <person name="Portillo F."/>
            <person name="Potier S."/>
            <person name="Purnelle B."/>
            <person name="Rieger M."/>
            <person name="Riles L."/>
            <person name="Rinaldi T."/>
            <person name="Robben J."/>
            <person name="Rodrigues-Pousada C."/>
            <person name="Rodriguez-Belmonte E."/>
            <person name="Rodriguez-Torres A.M."/>
            <person name="Rose M."/>
            <person name="Ruzzi M."/>
            <person name="Saliola M."/>
            <person name="Sanchez-Perez M."/>
            <person name="Schaefer B."/>
            <person name="Schaefer M."/>
            <person name="Scharfe M."/>
            <person name="Schmidheini T."/>
            <person name="Schreer A."/>
            <person name="Skala J."/>
            <person name="Souciet J.-L."/>
            <person name="Steensma H.Y."/>
            <person name="Talla E."/>
            <person name="Thierry A."/>
            <person name="Vandenbol M."/>
            <person name="van der Aart Q.J.M."/>
            <person name="Van Dyck L."/>
            <person name="Vanoni M."/>
            <person name="Verhasselt P."/>
            <person name="Voet M."/>
            <person name="Volckaert G."/>
            <person name="Wambutt R."/>
            <person name="Watson M.D."/>
            <person name="Weber N."/>
            <person name="Wedler E."/>
            <person name="Wedler H."/>
            <person name="Wipfli P."/>
            <person name="Wolf K."/>
            <person name="Wright L.F."/>
            <person name="Zaccaria P."/>
            <person name="Zimmermann M."/>
            <person name="Zollner A."/>
            <person name="Kleine K."/>
        </authorList>
    </citation>
    <scope>NUCLEOTIDE SEQUENCE [LARGE SCALE GENOMIC DNA]</scope>
    <source>
        <strain>ATCC 204508 / S288c</strain>
    </source>
</reference>
<reference key="4">
    <citation type="journal article" date="2014" name="G3 (Bethesda)">
        <title>The reference genome sequence of Saccharomyces cerevisiae: Then and now.</title>
        <authorList>
            <person name="Engel S.R."/>
            <person name="Dietrich F.S."/>
            <person name="Fisk D.G."/>
            <person name="Binkley G."/>
            <person name="Balakrishnan R."/>
            <person name="Costanzo M.C."/>
            <person name="Dwight S.S."/>
            <person name="Hitz B.C."/>
            <person name="Karra K."/>
            <person name="Nash R.S."/>
            <person name="Weng S."/>
            <person name="Wong E.D."/>
            <person name="Lloyd P."/>
            <person name="Skrzypek M.S."/>
            <person name="Miyasato S.R."/>
            <person name="Simison M."/>
            <person name="Cherry J.M."/>
        </authorList>
    </citation>
    <scope>GENOME REANNOTATION</scope>
    <source>
        <strain>ATCC 204508 / S288c</strain>
    </source>
</reference>
<reference key="5">
    <citation type="journal article" date="1990" name="Proc. Natl. Acad. Sci. U.S.A.">
        <title>Identification of five putative yeast RNA helicase genes.</title>
        <authorList>
            <person name="Chang T.-H."/>
            <person name="Arenas J."/>
            <person name="Abelson J."/>
        </authorList>
    </citation>
    <scope>NUCLEOTIDE SEQUENCE [GENOMIC DNA] OF 260-448</scope>
</reference>
<reference key="6">
    <citation type="journal article" date="1997" name="Mol. Cell. Biol.">
        <title>Dbp3p, a putative RNA helicase in Saccharomyces cerevisiae, is required for efficient pre-rRNA processing predominantly at site A3.</title>
        <authorList>
            <person name="Weaver P.L."/>
            <person name="Sun C."/>
            <person name="Chang T.-H."/>
        </authorList>
    </citation>
    <scope>FUNCTION</scope>
    <scope>SUBCELLULAR LOCATION</scope>
</reference>
<reference key="7">
    <citation type="journal article" date="2003" name="Nature">
        <title>Global analysis of protein localization in budding yeast.</title>
        <authorList>
            <person name="Huh W.-K."/>
            <person name="Falvo J.V."/>
            <person name="Gerke L.C."/>
            <person name="Carroll A.S."/>
            <person name="Howson R.W."/>
            <person name="Weissman J.S."/>
            <person name="O'Shea E.K."/>
        </authorList>
    </citation>
    <scope>SUBCELLULAR LOCATION [LARGE SCALE ANALYSIS]</scope>
</reference>
<reference key="8">
    <citation type="journal article" date="2003" name="Nature">
        <title>Global analysis of protein expression in yeast.</title>
        <authorList>
            <person name="Ghaemmaghami S."/>
            <person name="Huh W.-K."/>
            <person name="Bower K."/>
            <person name="Howson R.W."/>
            <person name="Belle A."/>
            <person name="Dephoure N."/>
            <person name="O'Shea E.K."/>
            <person name="Weissman J.S."/>
        </authorList>
    </citation>
    <scope>LEVEL OF PROTEIN EXPRESSION [LARGE SCALE ANALYSIS]</scope>
</reference>
<reference key="9">
    <citation type="journal article" date="2012" name="Proc. Natl. Acad. Sci. U.S.A.">
        <title>N-terminal acetylome analyses and functional insights of the N-terminal acetyltransferase NatB.</title>
        <authorList>
            <person name="Van Damme P."/>
            <person name="Lasa M."/>
            <person name="Polevoda B."/>
            <person name="Gazquez C."/>
            <person name="Elosegui-Artola A."/>
            <person name="Kim D.S."/>
            <person name="De Juan-Pardo E."/>
            <person name="Demeyer K."/>
            <person name="Hole K."/>
            <person name="Larrea E."/>
            <person name="Timmerman E."/>
            <person name="Prieto J."/>
            <person name="Arnesen T."/>
            <person name="Sherman F."/>
            <person name="Gevaert K."/>
            <person name="Aldabe R."/>
        </authorList>
    </citation>
    <scope>IDENTIFICATION BY MASS SPECTROMETRY [LARGE SCALE ANALYSIS]</scope>
</reference>
<comment type="function">
    <text evidence="6">ATP-dependent RNA helicase required for 60S ribosomal subunit synthesis. Involved in efficient pre-rRNA processing, predominantly at site A3, which is necessary for the normal formation of 25S and 5.8S rRNAs.</text>
</comment>
<comment type="catalytic activity">
    <reaction>
        <text>ATP + H2O = ADP + phosphate + H(+)</text>
        <dbReference type="Rhea" id="RHEA:13065"/>
        <dbReference type="ChEBI" id="CHEBI:15377"/>
        <dbReference type="ChEBI" id="CHEBI:15378"/>
        <dbReference type="ChEBI" id="CHEBI:30616"/>
        <dbReference type="ChEBI" id="CHEBI:43474"/>
        <dbReference type="ChEBI" id="CHEBI:456216"/>
        <dbReference type="EC" id="3.6.4.13"/>
    </reaction>
</comment>
<comment type="subcellular location">
    <subcellularLocation>
        <location evidence="4 6">Nucleus</location>
        <location evidence="4 6">Nucleolus</location>
    </subcellularLocation>
</comment>
<comment type="domain">
    <text>The Q motif is unique to and characteristic of the DEAD box family of RNA helicases and controls ATP binding and hydrolysis.</text>
</comment>
<comment type="miscellaneous">
    <text evidence="5">Present with 38900 molecules/cell in log phase SD medium.</text>
</comment>
<comment type="similarity">
    <text evidence="7">Belongs to the DEAD box helicase family. DDX5/DBP2 subfamily.</text>
</comment>
<proteinExistence type="evidence at protein level"/>